<sequence>MGASREKKQQIVAEFKDKLSKAQTVIFTSFSGLTVEDETVLRRKFKEANSEYKVYKNTLMTIAARELGYGDDLIKYFEGPTSVAFGYEDPVAPAKILTEFMKDHKGLELKVGIVNGKIVSPQEIEALAKLPSREELLAKALGSMKAPITNLVFVLSGTLRSLVYALNAIKEKKQAEA</sequence>
<evidence type="ECO:0000255" key="1">
    <source>
        <dbReference type="HAMAP-Rule" id="MF_00362"/>
    </source>
</evidence>
<evidence type="ECO:0000305" key="2"/>
<organism>
    <name type="scientific">Caldanaerobacter subterraneus subsp. tengcongensis (strain DSM 15242 / JCM 11007 / NBRC 100824 / MB4)</name>
    <name type="common">Thermoanaerobacter tengcongensis</name>
    <dbReference type="NCBI Taxonomy" id="273068"/>
    <lineage>
        <taxon>Bacteria</taxon>
        <taxon>Bacillati</taxon>
        <taxon>Bacillota</taxon>
        <taxon>Clostridia</taxon>
        <taxon>Thermoanaerobacterales</taxon>
        <taxon>Thermoanaerobacteraceae</taxon>
        <taxon>Caldanaerobacter</taxon>
    </lineage>
</organism>
<name>RL10_CALS4</name>
<gene>
    <name evidence="1" type="primary">rplJ</name>
    <name type="ordered locus">TTE2304</name>
</gene>
<reference key="1">
    <citation type="journal article" date="2002" name="Genome Res.">
        <title>A complete sequence of the T. tengcongensis genome.</title>
        <authorList>
            <person name="Bao Q."/>
            <person name="Tian Y."/>
            <person name="Li W."/>
            <person name="Xu Z."/>
            <person name="Xuan Z."/>
            <person name="Hu S."/>
            <person name="Dong W."/>
            <person name="Yang J."/>
            <person name="Chen Y."/>
            <person name="Xue Y."/>
            <person name="Xu Y."/>
            <person name="Lai X."/>
            <person name="Huang L."/>
            <person name="Dong X."/>
            <person name="Ma Y."/>
            <person name="Ling L."/>
            <person name="Tan H."/>
            <person name="Chen R."/>
            <person name="Wang J."/>
            <person name="Yu J."/>
            <person name="Yang H."/>
        </authorList>
    </citation>
    <scope>NUCLEOTIDE SEQUENCE [LARGE SCALE GENOMIC DNA]</scope>
    <source>
        <strain>DSM 15242 / JCM 11007 / NBRC 100824 / MB4</strain>
    </source>
</reference>
<accession>Q8R7U4</accession>
<feature type="chain" id="PRO_0000154737" description="Large ribosomal subunit protein uL10">
    <location>
        <begin position="1"/>
        <end position="177"/>
    </location>
</feature>
<dbReference type="EMBL" id="AE008691">
    <property type="protein sequence ID" value="AAM25445.1"/>
    <property type="molecule type" value="Genomic_DNA"/>
</dbReference>
<dbReference type="RefSeq" id="WP_011026348.1">
    <property type="nucleotide sequence ID" value="NZ_JANUCV010000001.1"/>
</dbReference>
<dbReference type="SMR" id="Q8R7U4"/>
<dbReference type="STRING" id="273068.TTE2304"/>
<dbReference type="KEGG" id="tte:TTE2304"/>
<dbReference type="eggNOG" id="COG0244">
    <property type="taxonomic scope" value="Bacteria"/>
</dbReference>
<dbReference type="HOGENOM" id="CLU_092227_2_1_9"/>
<dbReference type="OrthoDB" id="9808307at2"/>
<dbReference type="Proteomes" id="UP000000555">
    <property type="component" value="Chromosome"/>
</dbReference>
<dbReference type="GO" id="GO:1990904">
    <property type="term" value="C:ribonucleoprotein complex"/>
    <property type="evidence" value="ECO:0007669"/>
    <property type="project" value="UniProtKB-KW"/>
</dbReference>
<dbReference type="GO" id="GO:0005840">
    <property type="term" value="C:ribosome"/>
    <property type="evidence" value="ECO:0007669"/>
    <property type="project" value="UniProtKB-KW"/>
</dbReference>
<dbReference type="GO" id="GO:0070180">
    <property type="term" value="F:large ribosomal subunit rRNA binding"/>
    <property type="evidence" value="ECO:0007669"/>
    <property type="project" value="UniProtKB-UniRule"/>
</dbReference>
<dbReference type="GO" id="GO:0006412">
    <property type="term" value="P:translation"/>
    <property type="evidence" value="ECO:0007669"/>
    <property type="project" value="UniProtKB-UniRule"/>
</dbReference>
<dbReference type="CDD" id="cd05797">
    <property type="entry name" value="Ribosomal_L10"/>
    <property type="match status" value="1"/>
</dbReference>
<dbReference type="Gene3D" id="3.30.70.1730">
    <property type="match status" value="1"/>
</dbReference>
<dbReference type="Gene3D" id="6.10.250.290">
    <property type="match status" value="1"/>
</dbReference>
<dbReference type="HAMAP" id="MF_00362">
    <property type="entry name" value="Ribosomal_uL10"/>
    <property type="match status" value="1"/>
</dbReference>
<dbReference type="InterPro" id="IPR001790">
    <property type="entry name" value="Ribosomal_uL10"/>
</dbReference>
<dbReference type="InterPro" id="IPR043141">
    <property type="entry name" value="Ribosomal_uL10-like_sf"/>
</dbReference>
<dbReference type="InterPro" id="IPR022973">
    <property type="entry name" value="Ribosomal_uL10_bac"/>
</dbReference>
<dbReference type="InterPro" id="IPR047865">
    <property type="entry name" value="Ribosomal_uL10_bac_type"/>
</dbReference>
<dbReference type="NCBIfam" id="NF000955">
    <property type="entry name" value="PRK00099.1-1"/>
    <property type="match status" value="1"/>
</dbReference>
<dbReference type="PANTHER" id="PTHR11560">
    <property type="entry name" value="39S RIBOSOMAL PROTEIN L10, MITOCHONDRIAL"/>
    <property type="match status" value="1"/>
</dbReference>
<dbReference type="Pfam" id="PF00466">
    <property type="entry name" value="Ribosomal_L10"/>
    <property type="match status" value="1"/>
</dbReference>
<dbReference type="SUPFAM" id="SSF160369">
    <property type="entry name" value="Ribosomal protein L10-like"/>
    <property type="match status" value="1"/>
</dbReference>
<proteinExistence type="inferred from homology"/>
<protein>
    <recommendedName>
        <fullName evidence="1">Large ribosomal subunit protein uL10</fullName>
    </recommendedName>
    <alternativeName>
        <fullName evidence="2">50S ribosomal protein L10</fullName>
    </alternativeName>
</protein>
<comment type="function">
    <text evidence="1">Forms part of the ribosomal stalk, playing a central role in the interaction of the ribosome with GTP-bound translation factors.</text>
</comment>
<comment type="subunit">
    <text evidence="1">Part of the ribosomal stalk of the 50S ribosomal subunit. The N-terminus interacts with L11 and the large rRNA to form the base of the stalk. The C-terminus forms an elongated spine to which L12 dimers bind in a sequential fashion forming a multimeric L10(L12)X complex.</text>
</comment>
<comment type="similarity">
    <text evidence="1">Belongs to the universal ribosomal protein uL10 family.</text>
</comment>
<keyword id="KW-1185">Reference proteome</keyword>
<keyword id="KW-0687">Ribonucleoprotein</keyword>
<keyword id="KW-0689">Ribosomal protein</keyword>
<keyword id="KW-0694">RNA-binding</keyword>
<keyword id="KW-0699">rRNA-binding</keyword>